<keyword id="KW-0010">Activator</keyword>
<keyword id="KW-0238">DNA-binding</keyword>
<keyword id="KW-1185">Reference proteome</keyword>
<keyword id="KW-0804">Transcription</keyword>
<keyword id="KW-0805">Transcription regulation</keyword>
<protein>
    <recommendedName>
        <fullName>Probable nitrogen assimilation transcriptional activator</fullName>
    </recommendedName>
</protein>
<accession>P52693</accession>
<accession>Q31NU7</accession>
<dbReference type="EMBL" id="D16303">
    <property type="protein sequence ID" value="BAA03810.1"/>
    <property type="molecule type" value="Genomic_DNA"/>
</dbReference>
<dbReference type="EMBL" id="CP000100">
    <property type="protein sequence ID" value="ABB57272.1"/>
    <property type="molecule type" value="Genomic_DNA"/>
</dbReference>
<dbReference type="RefSeq" id="WP_011242622.1">
    <property type="nucleotide sequence ID" value="NZ_JACJTX010000003.1"/>
</dbReference>
<dbReference type="SMR" id="P52693"/>
<dbReference type="STRING" id="1140.Synpcc7942_1242"/>
<dbReference type="PaxDb" id="1140-Synpcc7942_1242"/>
<dbReference type="KEGG" id="syf:Synpcc7942_1242"/>
<dbReference type="eggNOG" id="COG0583">
    <property type="taxonomic scope" value="Bacteria"/>
</dbReference>
<dbReference type="HOGENOM" id="CLU_039613_6_0_3"/>
<dbReference type="OrthoDB" id="119203at2"/>
<dbReference type="BioCyc" id="SYNEL:SYNPCC7942_1242-MONOMER"/>
<dbReference type="Proteomes" id="UP000889800">
    <property type="component" value="Chromosome"/>
</dbReference>
<dbReference type="GO" id="GO:0005829">
    <property type="term" value="C:cytosol"/>
    <property type="evidence" value="ECO:0007669"/>
    <property type="project" value="TreeGrafter"/>
</dbReference>
<dbReference type="GO" id="GO:0003677">
    <property type="term" value="F:DNA binding"/>
    <property type="evidence" value="ECO:0007669"/>
    <property type="project" value="UniProtKB-KW"/>
</dbReference>
<dbReference type="GO" id="GO:0003700">
    <property type="term" value="F:DNA-binding transcription factor activity"/>
    <property type="evidence" value="ECO:0007669"/>
    <property type="project" value="InterPro"/>
</dbReference>
<dbReference type="CDD" id="cd05466">
    <property type="entry name" value="PBP2_LTTR_substrate"/>
    <property type="match status" value="1"/>
</dbReference>
<dbReference type="FunFam" id="1.10.10.10:FF:000001">
    <property type="entry name" value="LysR family transcriptional regulator"/>
    <property type="match status" value="1"/>
</dbReference>
<dbReference type="Gene3D" id="3.40.190.290">
    <property type="match status" value="1"/>
</dbReference>
<dbReference type="Gene3D" id="1.10.10.10">
    <property type="entry name" value="Winged helix-like DNA-binding domain superfamily/Winged helix DNA-binding domain"/>
    <property type="match status" value="1"/>
</dbReference>
<dbReference type="InterPro" id="IPR050950">
    <property type="entry name" value="HTH-type_LysR_regulators"/>
</dbReference>
<dbReference type="InterPro" id="IPR005119">
    <property type="entry name" value="LysR_subst-bd"/>
</dbReference>
<dbReference type="InterPro" id="IPR000847">
    <property type="entry name" value="Tscrpt_reg_HTH_LysR"/>
</dbReference>
<dbReference type="InterPro" id="IPR036388">
    <property type="entry name" value="WH-like_DNA-bd_sf"/>
</dbReference>
<dbReference type="InterPro" id="IPR036390">
    <property type="entry name" value="WH_DNA-bd_sf"/>
</dbReference>
<dbReference type="PANTHER" id="PTHR30419">
    <property type="entry name" value="HTH-TYPE TRANSCRIPTIONAL REGULATOR YBHD"/>
    <property type="match status" value="1"/>
</dbReference>
<dbReference type="PANTHER" id="PTHR30419:SF8">
    <property type="entry name" value="NITROGEN ASSIMILATION TRANSCRIPTIONAL ACTIVATOR-RELATED"/>
    <property type="match status" value="1"/>
</dbReference>
<dbReference type="Pfam" id="PF00126">
    <property type="entry name" value="HTH_1"/>
    <property type="match status" value="1"/>
</dbReference>
<dbReference type="Pfam" id="PF03466">
    <property type="entry name" value="LysR_substrate"/>
    <property type="match status" value="1"/>
</dbReference>
<dbReference type="PRINTS" id="PR00039">
    <property type="entry name" value="HTHLYSR"/>
</dbReference>
<dbReference type="SUPFAM" id="SSF53850">
    <property type="entry name" value="Periplasmic binding protein-like II"/>
    <property type="match status" value="1"/>
</dbReference>
<dbReference type="SUPFAM" id="SSF46785">
    <property type="entry name" value="Winged helix' DNA-binding domain"/>
    <property type="match status" value="1"/>
</dbReference>
<dbReference type="PROSITE" id="PS50931">
    <property type="entry name" value="HTH_LYSR"/>
    <property type="match status" value="1"/>
</dbReference>
<name>NTCB_SYNE7</name>
<sequence length="309" mass="34901">MRLEQLQAALRVAETGSFQEAAQKVGCNQSTISRQVKGLEDELGIALFRRQGRMKLTAAGERLLPRLRRICQEWQTACTEIEELLTGRQTELCMAIADSIGGCYLPAVLNRFQQQWPSIHLRVSTLGSDRALKVLRDGLIDLAIVMDSPTLTTSAGLVVDLLLEEEVQVLLSVDHPLADQKAIAWEQLSHVPQVVFKDGYGMQRLVEQRFRELGLELNSCLELNSLDSFRGVVREGYWLALLPQAALVDARHDPRLVIRPTAEPRLTRRIKLVIPEEQLSLPPVRHFRQLCREAMTAELCDFKTLSQLF</sequence>
<organism>
    <name type="scientific">Synechococcus elongatus (strain ATCC 33912 / PCC 7942 / FACHB-805)</name>
    <name type="common">Anacystis nidulans R2</name>
    <dbReference type="NCBI Taxonomy" id="1140"/>
    <lineage>
        <taxon>Bacteria</taxon>
        <taxon>Bacillati</taxon>
        <taxon>Cyanobacteriota</taxon>
        <taxon>Cyanophyceae</taxon>
        <taxon>Synechococcales</taxon>
        <taxon>Synechococcaceae</taxon>
        <taxon>Synechococcus</taxon>
    </lineage>
</organism>
<reference key="1">
    <citation type="journal article" date="1995" name="J. Bacteriol.">
        <title>Identification and characterization of two nitrogen-regulated genes of the cyanobacterium Synechococcus sp. strain PCC7942 required for maximum efficiency of nitrogen assimilation.</title>
        <authorList>
            <person name="Suzuki I."/>
            <person name="Horie N."/>
            <person name="Sugiyama T."/>
            <person name="Omata T."/>
        </authorList>
    </citation>
    <scope>NUCLEOTIDE SEQUENCE [GENOMIC DNA]</scope>
</reference>
<reference key="2">
    <citation type="submission" date="2005-08" db="EMBL/GenBank/DDBJ databases">
        <title>Complete sequence of chromosome 1 of Synechococcus elongatus PCC 7942.</title>
        <authorList>
            <consortium name="US DOE Joint Genome Institute"/>
            <person name="Copeland A."/>
            <person name="Lucas S."/>
            <person name="Lapidus A."/>
            <person name="Barry K."/>
            <person name="Detter J.C."/>
            <person name="Glavina T."/>
            <person name="Hammon N."/>
            <person name="Israni S."/>
            <person name="Pitluck S."/>
            <person name="Schmutz J."/>
            <person name="Larimer F."/>
            <person name="Land M."/>
            <person name="Kyrpides N."/>
            <person name="Lykidis A."/>
            <person name="Golden S."/>
            <person name="Richardson P."/>
        </authorList>
    </citation>
    <scope>NUCLEOTIDE SEQUENCE [LARGE SCALE GENOMIC DNA]</scope>
    <source>
        <strain>ATCC 33912 / PCC 7942 / FACHB-805</strain>
    </source>
</reference>
<feature type="chain" id="PRO_0000105725" description="Probable nitrogen assimilation transcriptional activator">
    <location>
        <begin position="1"/>
        <end position="309"/>
    </location>
</feature>
<feature type="domain" description="HTH lysR-type" evidence="1">
    <location>
        <begin position="1"/>
        <end position="57"/>
    </location>
</feature>
<feature type="DNA-binding region" description="H-T-H motif" evidence="1">
    <location>
        <begin position="18"/>
        <end position="37"/>
    </location>
</feature>
<evidence type="ECO:0000255" key="1">
    <source>
        <dbReference type="PROSITE-ProRule" id="PRU00253"/>
    </source>
</evidence>
<evidence type="ECO:0000305" key="2"/>
<proteinExistence type="inferred from homology"/>
<gene>
    <name type="primary">ntcB</name>
    <name type="ordered locus">Synpcc7942_1242</name>
</gene>
<comment type="function">
    <text>Seems to regulate utilization of fixed nitrogen by controlling the expression of a certain gene(s) involved in nitrogen metabolism.</text>
</comment>
<comment type="similarity">
    <text evidence="2">Belongs to the LysR transcriptional regulatory family.</text>
</comment>